<sequence>MRLNTLSPAEGAKHNAKRLGRGIGSGLGKTSGRGHKGQKARTGGGVRRGFEGGQMPLYRRLPKFGFTSMKSAVTAEVRLNDLAKVEGNIITLDTLKAANVLTKDIRFAKVILAGEVKTAVTIRGLGVTKGAKVAIEAAGGSIEE</sequence>
<protein>
    <recommendedName>
        <fullName evidence="1">Large ribosomal subunit protein uL15</fullName>
    </recommendedName>
    <alternativeName>
        <fullName evidence="3">50S ribosomal protein L15</fullName>
    </alternativeName>
</protein>
<comment type="function">
    <text evidence="1">Binds to the 23S rRNA.</text>
</comment>
<comment type="subunit">
    <text evidence="1">Part of the 50S ribosomal subunit.</text>
</comment>
<comment type="similarity">
    <text evidence="1">Belongs to the universal ribosomal protein uL15 family.</text>
</comment>
<feature type="chain" id="PRO_1000054471" description="Large ribosomal subunit protein uL15">
    <location>
        <begin position="1"/>
        <end position="144"/>
    </location>
</feature>
<feature type="region of interest" description="Disordered" evidence="2">
    <location>
        <begin position="1"/>
        <end position="53"/>
    </location>
</feature>
<feature type="compositionally biased region" description="Gly residues" evidence="2">
    <location>
        <begin position="21"/>
        <end position="31"/>
    </location>
</feature>
<name>RL15_HISS1</name>
<dbReference type="EMBL" id="CP000436">
    <property type="protein sequence ID" value="ABI24360.1"/>
    <property type="molecule type" value="Genomic_DNA"/>
</dbReference>
<dbReference type="SMR" id="Q0I143"/>
<dbReference type="KEGG" id="hso:HS_0079"/>
<dbReference type="eggNOG" id="COG0200">
    <property type="taxonomic scope" value="Bacteria"/>
</dbReference>
<dbReference type="HOGENOM" id="CLU_055188_4_2_6"/>
<dbReference type="GO" id="GO:0022625">
    <property type="term" value="C:cytosolic large ribosomal subunit"/>
    <property type="evidence" value="ECO:0007669"/>
    <property type="project" value="TreeGrafter"/>
</dbReference>
<dbReference type="GO" id="GO:0019843">
    <property type="term" value="F:rRNA binding"/>
    <property type="evidence" value="ECO:0007669"/>
    <property type="project" value="UniProtKB-UniRule"/>
</dbReference>
<dbReference type="GO" id="GO:0003735">
    <property type="term" value="F:structural constituent of ribosome"/>
    <property type="evidence" value="ECO:0007669"/>
    <property type="project" value="InterPro"/>
</dbReference>
<dbReference type="GO" id="GO:0006412">
    <property type="term" value="P:translation"/>
    <property type="evidence" value="ECO:0007669"/>
    <property type="project" value="UniProtKB-UniRule"/>
</dbReference>
<dbReference type="Gene3D" id="3.100.10.10">
    <property type="match status" value="1"/>
</dbReference>
<dbReference type="HAMAP" id="MF_01341">
    <property type="entry name" value="Ribosomal_uL15"/>
    <property type="match status" value="1"/>
</dbReference>
<dbReference type="InterPro" id="IPR030878">
    <property type="entry name" value="Ribosomal_uL15"/>
</dbReference>
<dbReference type="InterPro" id="IPR021131">
    <property type="entry name" value="Ribosomal_uL15/eL18"/>
</dbReference>
<dbReference type="InterPro" id="IPR036227">
    <property type="entry name" value="Ribosomal_uL15/eL18_sf"/>
</dbReference>
<dbReference type="InterPro" id="IPR005749">
    <property type="entry name" value="Ribosomal_uL15_bac-type"/>
</dbReference>
<dbReference type="InterPro" id="IPR001196">
    <property type="entry name" value="Ribosomal_uL15_CS"/>
</dbReference>
<dbReference type="NCBIfam" id="TIGR01071">
    <property type="entry name" value="rplO_bact"/>
    <property type="match status" value="1"/>
</dbReference>
<dbReference type="PANTHER" id="PTHR12934">
    <property type="entry name" value="50S RIBOSOMAL PROTEIN L15"/>
    <property type="match status" value="1"/>
</dbReference>
<dbReference type="PANTHER" id="PTHR12934:SF11">
    <property type="entry name" value="LARGE RIBOSOMAL SUBUNIT PROTEIN UL15M"/>
    <property type="match status" value="1"/>
</dbReference>
<dbReference type="Pfam" id="PF00828">
    <property type="entry name" value="Ribosomal_L27A"/>
    <property type="match status" value="1"/>
</dbReference>
<dbReference type="SUPFAM" id="SSF52080">
    <property type="entry name" value="Ribosomal proteins L15p and L18e"/>
    <property type="match status" value="1"/>
</dbReference>
<dbReference type="PROSITE" id="PS00475">
    <property type="entry name" value="RIBOSOMAL_L15"/>
    <property type="match status" value="1"/>
</dbReference>
<reference key="1">
    <citation type="journal article" date="2007" name="J. Bacteriol.">
        <title>Complete genome sequence of Haemophilus somnus (Histophilus somni) strain 129Pt and comparison to Haemophilus ducreyi 35000HP and Haemophilus influenzae Rd.</title>
        <authorList>
            <person name="Challacombe J.F."/>
            <person name="Duncan A.J."/>
            <person name="Brettin T.S."/>
            <person name="Bruce D."/>
            <person name="Chertkov O."/>
            <person name="Detter J.C."/>
            <person name="Han C.S."/>
            <person name="Misra M."/>
            <person name="Richardson P."/>
            <person name="Tapia R."/>
            <person name="Thayer N."/>
            <person name="Xie G."/>
            <person name="Inzana T.J."/>
        </authorList>
    </citation>
    <scope>NUCLEOTIDE SEQUENCE [LARGE SCALE GENOMIC DNA]</scope>
    <source>
        <strain>129Pt</strain>
    </source>
</reference>
<gene>
    <name evidence="1" type="primary">rplO</name>
    <name type="ordered locus">HS_0079</name>
</gene>
<accession>Q0I143</accession>
<organism>
    <name type="scientific">Histophilus somni (strain 129Pt)</name>
    <name type="common">Haemophilus somnus</name>
    <dbReference type="NCBI Taxonomy" id="205914"/>
    <lineage>
        <taxon>Bacteria</taxon>
        <taxon>Pseudomonadati</taxon>
        <taxon>Pseudomonadota</taxon>
        <taxon>Gammaproteobacteria</taxon>
        <taxon>Pasteurellales</taxon>
        <taxon>Pasteurellaceae</taxon>
        <taxon>Histophilus</taxon>
    </lineage>
</organism>
<proteinExistence type="inferred from homology"/>
<keyword id="KW-0687">Ribonucleoprotein</keyword>
<keyword id="KW-0689">Ribosomal protein</keyword>
<keyword id="KW-0694">RNA-binding</keyword>
<keyword id="KW-0699">rRNA-binding</keyword>
<evidence type="ECO:0000255" key="1">
    <source>
        <dbReference type="HAMAP-Rule" id="MF_01341"/>
    </source>
</evidence>
<evidence type="ECO:0000256" key="2">
    <source>
        <dbReference type="SAM" id="MobiDB-lite"/>
    </source>
</evidence>
<evidence type="ECO:0000305" key="3"/>